<proteinExistence type="evidence at transcript level"/>
<accession>Q98SI1</accession>
<accession>Q1L968</accession>
<accession>Q4PRB2</accession>
<accession>Q8AWZ1</accession>
<accession>Q98SI0</accession>
<accession>Q9YGT8</accession>
<comment type="function">
    <text evidence="1">Sequence-specific transcription factor. Part of a developmental regulatory system that provides cells with specific positional identities on the anterior-posterior axis (By similarity).</text>
</comment>
<comment type="subcellular location">
    <subcellularLocation>
        <location evidence="2">Nucleus</location>
    </subcellularLocation>
</comment>
<comment type="alternative products">
    <event type="alternative splicing"/>
    <isoform>
        <id>Q98SI1-1</id>
        <name>1</name>
        <sequence type="displayed"/>
    </isoform>
    <isoform>
        <id>Q98SI1-2</id>
        <name>2</name>
        <sequence type="described" ref="VSP_012678"/>
    </isoform>
</comment>
<comment type="similarity">
    <text evidence="5">Belongs to the Antp homeobox family. Labial subfamily.</text>
</comment>
<dbReference type="EMBL" id="AJ306430">
    <property type="protein sequence ID" value="CAC34565.1"/>
    <property type="molecule type" value="mRNA"/>
</dbReference>
<dbReference type="EMBL" id="AJ306431">
    <property type="protein sequence ID" value="CAC34566.1"/>
    <property type="molecule type" value="mRNA"/>
</dbReference>
<dbReference type="EMBL" id="AF071243">
    <property type="protein sequence ID" value="AAD15937.1"/>
    <property type="molecule type" value="Genomic_DNA"/>
</dbReference>
<dbReference type="EMBL" id="AL645756">
    <property type="protein sequence ID" value="CAD52136.1"/>
    <property type="molecule type" value="Genomic_DNA"/>
</dbReference>
<dbReference type="EMBL" id="AL645756">
    <property type="protein sequence ID" value="CAD52137.1"/>
    <property type="molecule type" value="Genomic_DNA"/>
</dbReference>
<dbReference type="EMBL" id="CR382300">
    <property type="protein sequence ID" value="CAK10852.1"/>
    <property type="molecule type" value="Genomic_DNA"/>
</dbReference>
<dbReference type="EMBL" id="DQ060531">
    <property type="protein sequence ID" value="AAY67909.1"/>
    <property type="molecule type" value="mRNA"/>
</dbReference>
<dbReference type="RefSeq" id="NP_571611.1">
    <molecule id="Q98SI1-1"/>
    <property type="nucleotide sequence ID" value="NM_131536.2"/>
</dbReference>
<dbReference type="RefSeq" id="XP_017207752.1">
    <property type="nucleotide sequence ID" value="XM_017352263.1"/>
</dbReference>
<dbReference type="SMR" id="Q98SI1"/>
<dbReference type="FunCoup" id="Q98SI1">
    <property type="interactions" value="520"/>
</dbReference>
<dbReference type="STRING" id="7955.ENSDARP00000133272"/>
<dbReference type="PaxDb" id="7955-ENSDARP00000074910"/>
<dbReference type="Ensembl" id="ENSDART00000167757">
    <molecule id="Q98SI1-1"/>
    <property type="protein sequence ID" value="ENSDARP00000133272"/>
    <property type="gene ID" value="ENSDARG00000104307"/>
</dbReference>
<dbReference type="GeneID" id="58051"/>
<dbReference type="KEGG" id="dre:58051"/>
<dbReference type="AGR" id="ZFIN:ZDB-GENE-000823-5"/>
<dbReference type="CTD" id="58051"/>
<dbReference type="ZFIN" id="ZDB-GENE-000823-5">
    <property type="gene designation" value="hoxa1a"/>
</dbReference>
<dbReference type="eggNOG" id="KOG0489">
    <property type="taxonomic scope" value="Eukaryota"/>
</dbReference>
<dbReference type="InParanoid" id="Q98SI1"/>
<dbReference type="OMA" id="SAQTFDW"/>
<dbReference type="OrthoDB" id="6159439at2759"/>
<dbReference type="PhylomeDB" id="Q98SI1"/>
<dbReference type="TreeFam" id="TF317730"/>
<dbReference type="PRO" id="PR:Q98SI1"/>
<dbReference type="Proteomes" id="UP000000437">
    <property type="component" value="Chromosome 19"/>
</dbReference>
<dbReference type="Bgee" id="ENSDARG00000104307">
    <property type="expression patterns" value="Expressed in midbrain tegmentum and 18 other cell types or tissues"/>
</dbReference>
<dbReference type="ExpressionAtlas" id="Q98SI1">
    <property type="expression patterns" value="baseline"/>
</dbReference>
<dbReference type="GO" id="GO:0005634">
    <property type="term" value="C:nucleus"/>
    <property type="evidence" value="ECO:0000318"/>
    <property type="project" value="GO_Central"/>
</dbReference>
<dbReference type="GO" id="GO:0000981">
    <property type="term" value="F:DNA-binding transcription factor activity, RNA polymerase II-specific"/>
    <property type="evidence" value="ECO:0000318"/>
    <property type="project" value="GO_Central"/>
</dbReference>
<dbReference type="GO" id="GO:0000978">
    <property type="term" value="F:RNA polymerase II cis-regulatory region sequence-specific DNA binding"/>
    <property type="evidence" value="ECO:0000318"/>
    <property type="project" value="GO_Central"/>
</dbReference>
<dbReference type="GO" id="GO:0006357">
    <property type="term" value="P:regulation of transcription by RNA polymerase II"/>
    <property type="evidence" value="ECO:0000318"/>
    <property type="project" value="GO_Central"/>
</dbReference>
<dbReference type="GO" id="GO:0003187">
    <property type="term" value="P:ventriculo bulbo valve morphogenesis"/>
    <property type="evidence" value="ECO:0000315"/>
    <property type="project" value="ZFIN"/>
</dbReference>
<dbReference type="CDD" id="cd00086">
    <property type="entry name" value="homeodomain"/>
    <property type="match status" value="1"/>
</dbReference>
<dbReference type="FunFam" id="1.10.10.60:FF:000113">
    <property type="entry name" value="homeobox protein Hox-B1"/>
    <property type="match status" value="1"/>
</dbReference>
<dbReference type="Gene3D" id="1.10.10.60">
    <property type="entry name" value="Homeodomain-like"/>
    <property type="match status" value="1"/>
</dbReference>
<dbReference type="InterPro" id="IPR001356">
    <property type="entry name" value="HD"/>
</dbReference>
<dbReference type="InterPro" id="IPR020479">
    <property type="entry name" value="HD_metazoa"/>
</dbReference>
<dbReference type="InterPro" id="IPR017970">
    <property type="entry name" value="Homeobox_CS"/>
</dbReference>
<dbReference type="InterPro" id="IPR009057">
    <property type="entry name" value="Homeodomain-like_sf"/>
</dbReference>
<dbReference type="InterPro" id="IPR046327">
    <property type="entry name" value="HXA1/B1/D1"/>
</dbReference>
<dbReference type="PANTHER" id="PTHR45946:SF3">
    <property type="entry name" value="HOMEOBOX PROTEIN HOX-A1"/>
    <property type="match status" value="1"/>
</dbReference>
<dbReference type="PANTHER" id="PTHR45946">
    <property type="entry name" value="HOMEOBOX PROTEIN ROUGH-RELATED"/>
    <property type="match status" value="1"/>
</dbReference>
<dbReference type="Pfam" id="PF00046">
    <property type="entry name" value="Homeodomain"/>
    <property type="match status" value="1"/>
</dbReference>
<dbReference type="PRINTS" id="PR00024">
    <property type="entry name" value="HOMEOBOX"/>
</dbReference>
<dbReference type="SMART" id="SM00389">
    <property type="entry name" value="HOX"/>
    <property type="match status" value="1"/>
</dbReference>
<dbReference type="SUPFAM" id="SSF46689">
    <property type="entry name" value="Homeodomain-like"/>
    <property type="match status" value="1"/>
</dbReference>
<dbReference type="PROSITE" id="PS00027">
    <property type="entry name" value="HOMEOBOX_1"/>
    <property type="match status" value="1"/>
</dbReference>
<dbReference type="PROSITE" id="PS50071">
    <property type="entry name" value="HOMEOBOX_2"/>
    <property type="match status" value="1"/>
</dbReference>
<evidence type="ECO:0000250" key="1">
    <source>
        <dbReference type="UniProtKB" id="Q90423"/>
    </source>
</evidence>
<evidence type="ECO:0000255" key="2">
    <source>
        <dbReference type="PROSITE-ProRule" id="PRU00108"/>
    </source>
</evidence>
<evidence type="ECO:0000256" key="3">
    <source>
        <dbReference type="SAM" id="MobiDB-lite"/>
    </source>
</evidence>
<evidence type="ECO:0000303" key="4">
    <source>
    </source>
</evidence>
<evidence type="ECO:0000305" key="5"/>
<organism>
    <name type="scientific">Danio rerio</name>
    <name type="common">Zebrafish</name>
    <name type="synonym">Brachydanio rerio</name>
    <dbReference type="NCBI Taxonomy" id="7955"/>
    <lineage>
        <taxon>Eukaryota</taxon>
        <taxon>Metazoa</taxon>
        <taxon>Chordata</taxon>
        <taxon>Craniata</taxon>
        <taxon>Vertebrata</taxon>
        <taxon>Euteleostomi</taxon>
        <taxon>Actinopterygii</taxon>
        <taxon>Neopterygii</taxon>
        <taxon>Teleostei</taxon>
        <taxon>Ostariophysi</taxon>
        <taxon>Cypriniformes</taxon>
        <taxon>Danionidae</taxon>
        <taxon>Danioninae</taxon>
        <taxon>Danio</taxon>
    </lineage>
</organism>
<keyword id="KW-0025">Alternative splicing</keyword>
<keyword id="KW-0217">Developmental protein</keyword>
<keyword id="KW-0238">DNA-binding</keyword>
<keyword id="KW-0371">Homeobox</keyword>
<keyword id="KW-0539">Nucleus</keyword>
<keyword id="KW-1185">Reference proteome</keyword>
<keyword id="KW-0804">Transcription</keyword>
<keyword id="KW-0805">Transcription regulation</keyword>
<name>HXA1A_DANRE</name>
<protein>
    <recommendedName>
        <fullName>Homeobox protein Hox-A1a</fullName>
        <shortName>Hox-A1</shortName>
    </recommendedName>
</protein>
<gene>
    <name type="primary">hoxa1a</name>
    <name type="synonym">hoxa1</name>
</gene>
<sequence>MSTFLDFSSISGGGDGGSGGSCSVRAFHGDHGLSTFQSSCAVRLNSCSGDERFMSNISSQDVINSQPQQAGSYQSPGTLSITYSAHPSYGTQSFCTGYNHYALNQDVESSVSFPQCGPLVYSGNISSTVVQHRHHRHGYSSGNVHLHGQFQYGSATYGNSSDQANLTFVAGCSNPLSPLHVPHHDACCSPLSDGVPTGQTFDWMKVKRNPPKTGKAGEYGFGGQPNTVRTNFSTKQLTELEKEFHFNKYLTRARRVEIAASLQLNETQVKIWFQNRRMKQKKREKEGLLPKSLSEQKDGLEKTEDASEKSPSAPSTPSPSPTVEAYSSN</sequence>
<reference key="1">
    <citation type="journal article" date="2001" name="Development">
        <title>Consequences of Hox gene duplication in the vertebrates: an investigation of the zebrafish Hox paralogue group 1 genes.</title>
        <authorList>
            <person name="McClintock J.M."/>
            <person name="Carlson R."/>
            <person name="Mann D.M."/>
            <person name="Prince V.E."/>
        </authorList>
    </citation>
    <scope>NUCLEOTIDE SEQUENCE [MRNA] (ISOFORMS 1 AND 2)</scope>
</reference>
<reference key="2">
    <citation type="journal article" date="1998" name="Science">
        <title>Zebrafish hox clusters and vertebrate genome evolution.</title>
        <authorList>
            <person name="Amores A."/>
            <person name="Force A."/>
            <person name="Yan Y.-L."/>
            <person name="Joly L."/>
            <person name="Amemiya C."/>
            <person name="Fritz A."/>
            <person name="Ho R.K."/>
            <person name="Langeland J."/>
            <person name="Prince V.E."/>
            <person name="Wang Y.-L."/>
            <person name="Westerfield M."/>
            <person name="Ekker M."/>
            <person name="Postlethwait J.H."/>
        </authorList>
    </citation>
    <scope>NUCLEOTIDE SEQUENCE [GENOMIC DNA]</scope>
</reference>
<reference key="3">
    <citation type="journal article" date="2013" name="Nature">
        <title>The zebrafish reference genome sequence and its relationship to the human genome.</title>
        <authorList>
            <person name="Howe K."/>
            <person name="Clark M.D."/>
            <person name="Torroja C.F."/>
            <person name="Torrance J."/>
            <person name="Berthelot C."/>
            <person name="Muffato M."/>
            <person name="Collins J.E."/>
            <person name="Humphray S."/>
            <person name="McLaren K."/>
            <person name="Matthews L."/>
            <person name="McLaren S."/>
            <person name="Sealy I."/>
            <person name="Caccamo M."/>
            <person name="Churcher C."/>
            <person name="Scott C."/>
            <person name="Barrett J.C."/>
            <person name="Koch R."/>
            <person name="Rauch G.J."/>
            <person name="White S."/>
            <person name="Chow W."/>
            <person name="Kilian B."/>
            <person name="Quintais L.T."/>
            <person name="Guerra-Assuncao J.A."/>
            <person name="Zhou Y."/>
            <person name="Gu Y."/>
            <person name="Yen J."/>
            <person name="Vogel J.H."/>
            <person name="Eyre T."/>
            <person name="Redmond S."/>
            <person name="Banerjee R."/>
            <person name="Chi J."/>
            <person name="Fu B."/>
            <person name="Langley E."/>
            <person name="Maguire S.F."/>
            <person name="Laird G.K."/>
            <person name="Lloyd D."/>
            <person name="Kenyon E."/>
            <person name="Donaldson S."/>
            <person name="Sehra H."/>
            <person name="Almeida-King J."/>
            <person name="Loveland J."/>
            <person name="Trevanion S."/>
            <person name="Jones M."/>
            <person name="Quail M."/>
            <person name="Willey D."/>
            <person name="Hunt A."/>
            <person name="Burton J."/>
            <person name="Sims S."/>
            <person name="McLay K."/>
            <person name="Plumb B."/>
            <person name="Davis J."/>
            <person name="Clee C."/>
            <person name="Oliver K."/>
            <person name="Clark R."/>
            <person name="Riddle C."/>
            <person name="Elliot D."/>
            <person name="Threadgold G."/>
            <person name="Harden G."/>
            <person name="Ware D."/>
            <person name="Begum S."/>
            <person name="Mortimore B."/>
            <person name="Kerry G."/>
            <person name="Heath P."/>
            <person name="Phillimore B."/>
            <person name="Tracey A."/>
            <person name="Corby N."/>
            <person name="Dunn M."/>
            <person name="Johnson C."/>
            <person name="Wood J."/>
            <person name="Clark S."/>
            <person name="Pelan S."/>
            <person name="Griffiths G."/>
            <person name="Smith M."/>
            <person name="Glithero R."/>
            <person name="Howden P."/>
            <person name="Barker N."/>
            <person name="Lloyd C."/>
            <person name="Stevens C."/>
            <person name="Harley J."/>
            <person name="Holt K."/>
            <person name="Panagiotidis G."/>
            <person name="Lovell J."/>
            <person name="Beasley H."/>
            <person name="Henderson C."/>
            <person name="Gordon D."/>
            <person name="Auger K."/>
            <person name="Wright D."/>
            <person name="Collins J."/>
            <person name="Raisen C."/>
            <person name="Dyer L."/>
            <person name="Leung K."/>
            <person name="Robertson L."/>
            <person name="Ambridge K."/>
            <person name="Leongamornlert D."/>
            <person name="McGuire S."/>
            <person name="Gilderthorp R."/>
            <person name="Griffiths C."/>
            <person name="Manthravadi D."/>
            <person name="Nichol S."/>
            <person name="Barker G."/>
            <person name="Whitehead S."/>
            <person name="Kay M."/>
            <person name="Brown J."/>
            <person name="Murnane C."/>
            <person name="Gray E."/>
            <person name="Humphries M."/>
            <person name="Sycamore N."/>
            <person name="Barker D."/>
            <person name="Saunders D."/>
            <person name="Wallis J."/>
            <person name="Babbage A."/>
            <person name="Hammond S."/>
            <person name="Mashreghi-Mohammadi M."/>
            <person name="Barr L."/>
            <person name="Martin S."/>
            <person name="Wray P."/>
            <person name="Ellington A."/>
            <person name="Matthews N."/>
            <person name="Ellwood M."/>
            <person name="Woodmansey R."/>
            <person name="Clark G."/>
            <person name="Cooper J."/>
            <person name="Tromans A."/>
            <person name="Grafham D."/>
            <person name="Skuce C."/>
            <person name="Pandian R."/>
            <person name="Andrews R."/>
            <person name="Harrison E."/>
            <person name="Kimberley A."/>
            <person name="Garnett J."/>
            <person name="Fosker N."/>
            <person name="Hall R."/>
            <person name="Garner P."/>
            <person name="Kelly D."/>
            <person name="Bird C."/>
            <person name="Palmer S."/>
            <person name="Gehring I."/>
            <person name="Berger A."/>
            <person name="Dooley C.M."/>
            <person name="Ersan-Urun Z."/>
            <person name="Eser C."/>
            <person name="Geiger H."/>
            <person name="Geisler M."/>
            <person name="Karotki L."/>
            <person name="Kirn A."/>
            <person name="Konantz J."/>
            <person name="Konantz M."/>
            <person name="Oberlander M."/>
            <person name="Rudolph-Geiger S."/>
            <person name="Teucke M."/>
            <person name="Lanz C."/>
            <person name="Raddatz G."/>
            <person name="Osoegawa K."/>
            <person name="Zhu B."/>
            <person name="Rapp A."/>
            <person name="Widaa S."/>
            <person name="Langford C."/>
            <person name="Yang F."/>
            <person name="Schuster S.C."/>
            <person name="Carter N.P."/>
            <person name="Harrow J."/>
            <person name="Ning Z."/>
            <person name="Herrero J."/>
            <person name="Searle S.M."/>
            <person name="Enright A."/>
            <person name="Geisler R."/>
            <person name="Plasterk R.H."/>
            <person name="Lee C."/>
            <person name="Westerfield M."/>
            <person name="de Jong P.J."/>
            <person name="Zon L.I."/>
            <person name="Postlethwait J.H."/>
            <person name="Nusslein-Volhard C."/>
            <person name="Hubbard T.J."/>
            <person name="Roest Crollius H."/>
            <person name="Rogers J."/>
            <person name="Stemple D.L."/>
        </authorList>
    </citation>
    <scope>NUCLEOTIDE SEQUENCE [LARGE SCALE GENOMIC DNA]</scope>
    <source>
        <strain>Tuebingen</strain>
    </source>
</reference>
<reference key="4">
    <citation type="journal article" date="2005" name="Evol. Dev.">
        <title>Genomic annotation and transcriptome analysis of the zebrafish (Danio rerio) hox complex with description of a novel member, hoxb13a.</title>
        <authorList>
            <person name="Corredor-Adamez M."/>
            <person name="Welten M.C.M."/>
            <person name="Spaink H.P."/>
            <person name="Jeffery J.E."/>
            <person name="Schoon R.T."/>
            <person name="de Bakker M.A.G."/>
            <person name="Bagowski C.P."/>
            <person name="Meijer A.H."/>
            <person name="Verbeek F.J."/>
            <person name="Richardson M.K."/>
        </authorList>
    </citation>
    <scope>NUCLEOTIDE SEQUENCE [MRNA] OF 136-224</scope>
    <source>
        <strain>Tuebingen</strain>
    </source>
</reference>
<feature type="chain" id="PRO_0000200033" description="Homeobox protein Hox-A1a">
    <location>
        <begin position="1"/>
        <end position="329"/>
    </location>
</feature>
<feature type="DNA-binding region" description="Homeobox" evidence="2">
    <location>
        <begin position="225"/>
        <end position="284"/>
    </location>
</feature>
<feature type="region of interest" description="Disordered" evidence="3">
    <location>
        <begin position="208"/>
        <end position="227"/>
    </location>
</feature>
<feature type="region of interest" description="Disordered" evidence="3">
    <location>
        <begin position="277"/>
        <end position="329"/>
    </location>
</feature>
<feature type="short sequence motif" description="Antp-type hexapeptide">
    <location>
        <begin position="200"/>
        <end position="205"/>
    </location>
</feature>
<feature type="compositionally biased region" description="Basic and acidic residues" evidence="3">
    <location>
        <begin position="283"/>
        <end position="308"/>
    </location>
</feature>
<feature type="splice variant" id="VSP_012678" description="In isoform 2." evidence="4">
    <location>
        <begin position="158"/>
        <end position="192"/>
    </location>
</feature>
<feature type="sequence conflict" description="In Ref. 2." evidence="5" ref="2">
    <original>MSTFLDFSSISGGGDGGSGGSCSVRAFH</original>
    <variation>MEVAGARAQSGRSQ</variation>
    <location>
        <begin position="1"/>
        <end position="28"/>
    </location>
</feature>
<feature type="sequence conflict" description="In Ref. 1; CAC34566." evidence="5" ref="1">
    <original>Q</original>
    <variation>E</variation>
    <location>
        <position position="296"/>
    </location>
</feature>